<reference key="1">
    <citation type="journal article" date="2008" name="Nature">
        <title>Ktu/PF13 is required for cytoplasmic pre-assembly of axonemal dyneins.</title>
        <authorList>
            <person name="Omran H."/>
            <person name="Kobayashi D."/>
            <person name="Olbrich H."/>
            <person name="Tsukahara T."/>
            <person name="Loges N.T."/>
            <person name="Hagiwara H."/>
            <person name="Zhang Q."/>
            <person name="Leblond G."/>
            <person name="O'Toole E."/>
            <person name="Hara C."/>
            <person name="Mizuno H."/>
            <person name="Kawano H."/>
            <person name="Fliegauf M."/>
            <person name="Yagi T."/>
            <person name="Koshida S."/>
            <person name="Miyawaki A."/>
            <person name="Zentgraf H."/>
            <person name="Seithe H."/>
            <person name="Reinhardt R."/>
            <person name="Watanabe Y."/>
            <person name="Kamiya R."/>
            <person name="Mitchell D.R."/>
            <person name="Takeda H."/>
        </authorList>
    </citation>
    <scope>NUCLEOTIDE SEQUENCE [MRNA]</scope>
    <scope>NUCLEOTIDE SEQUENCE [GENOMIC DNA] OF 1-580</scope>
    <scope>FUNCTION</scope>
    <scope>SUBCELLULAR LOCATION</scope>
    <scope>DISRUPTION PHENOTYPE</scope>
</reference>
<reference key="2">
    <citation type="journal article" date="1988" name="J. Cell Biol.">
        <title>Mutations at twelve independent loci result in absence of outer dynein arms in Chylamydomonas reinhardtii.</title>
        <authorList>
            <person name="Kamiya R."/>
        </authorList>
    </citation>
    <scope>IDENTIFICATION</scope>
</reference>
<gene>
    <name type="primary">pf13</name>
</gene>
<dbReference type="EMBL" id="AB455237">
    <property type="protein sequence ID" value="BAG69288.1"/>
    <property type="molecule type" value="mRNA"/>
</dbReference>
<dbReference type="EMBL" id="FJ160770">
    <property type="protein sequence ID" value="ACI01704.1"/>
    <property type="molecule type" value="Genomic_DNA"/>
</dbReference>
<dbReference type="SMR" id="B5BUZ8"/>
<dbReference type="PaxDb" id="3055-EDP00902"/>
<dbReference type="eggNOG" id="KOG4356">
    <property type="taxonomic scope" value="Eukaryota"/>
</dbReference>
<dbReference type="GO" id="GO:0005737">
    <property type="term" value="C:cytoplasm"/>
    <property type="evidence" value="ECO:0007669"/>
    <property type="project" value="UniProtKB-SubCell"/>
</dbReference>
<dbReference type="GO" id="GO:0070286">
    <property type="term" value="P:axonemal dynein complex assembly"/>
    <property type="evidence" value="ECO:0000315"/>
    <property type="project" value="UniProtKB"/>
</dbReference>
<dbReference type="GO" id="GO:0060294">
    <property type="term" value="P:cilium movement involved in cell motility"/>
    <property type="evidence" value="ECO:0000315"/>
    <property type="project" value="GO_Central"/>
</dbReference>
<dbReference type="GO" id="GO:0036158">
    <property type="term" value="P:outer dynein arm assembly"/>
    <property type="evidence" value="ECO:0000315"/>
    <property type="project" value="GO_Central"/>
</dbReference>
<dbReference type="HAMAP" id="MF_03069">
    <property type="entry name" value="Kintoun"/>
    <property type="match status" value="1"/>
</dbReference>
<dbReference type="InterPro" id="IPR034727">
    <property type="entry name" value="Kintoun"/>
</dbReference>
<dbReference type="InterPro" id="IPR050734">
    <property type="entry name" value="PIH1/Kintoun_subfamily"/>
</dbReference>
<dbReference type="InterPro" id="IPR012981">
    <property type="entry name" value="PIH1_N"/>
</dbReference>
<dbReference type="InterPro" id="IPR041442">
    <property type="entry name" value="PIH1D1/2/3_CS-like"/>
</dbReference>
<dbReference type="PANTHER" id="PTHR22997">
    <property type="entry name" value="PIH1 DOMAIN-CONTAINING PROTEIN 1"/>
    <property type="match status" value="1"/>
</dbReference>
<dbReference type="PANTHER" id="PTHR22997:SF0">
    <property type="entry name" value="PIH1 DOMAIN-CONTAINING PROTEIN 1"/>
    <property type="match status" value="1"/>
</dbReference>
<dbReference type="Pfam" id="PF08190">
    <property type="entry name" value="PIH1"/>
    <property type="match status" value="1"/>
</dbReference>
<dbReference type="Pfam" id="PF18201">
    <property type="entry name" value="PIH1_CS"/>
    <property type="match status" value="1"/>
</dbReference>
<feature type="chain" id="PRO_0000365815" description="Protein kintoun">
    <location>
        <begin position="1"/>
        <end position="675"/>
    </location>
</feature>
<feature type="region of interest" description="Disordered" evidence="2">
    <location>
        <begin position="98"/>
        <end position="131"/>
    </location>
</feature>
<feature type="region of interest" description="Disordered" evidence="2">
    <location>
        <begin position="265"/>
        <end position="293"/>
    </location>
</feature>
<feature type="region of interest" description="Disordered" evidence="2">
    <location>
        <begin position="310"/>
        <end position="340"/>
    </location>
</feature>
<feature type="region of interest" description="Disordered" evidence="2">
    <location>
        <begin position="509"/>
        <end position="659"/>
    </location>
</feature>
<feature type="compositionally biased region" description="Basic and acidic residues" evidence="2">
    <location>
        <begin position="102"/>
        <end position="113"/>
    </location>
</feature>
<feature type="compositionally biased region" description="Low complexity" evidence="2">
    <location>
        <begin position="279"/>
        <end position="293"/>
    </location>
</feature>
<feature type="compositionally biased region" description="Low complexity" evidence="2">
    <location>
        <begin position="529"/>
        <end position="543"/>
    </location>
</feature>
<feature type="compositionally biased region" description="Acidic residues" evidence="2">
    <location>
        <begin position="544"/>
        <end position="553"/>
    </location>
</feature>
<feature type="compositionally biased region" description="Low complexity" evidence="2">
    <location>
        <begin position="564"/>
        <end position="577"/>
    </location>
</feature>
<feature type="compositionally biased region" description="Basic and acidic residues" evidence="2">
    <location>
        <begin position="579"/>
        <end position="596"/>
    </location>
</feature>
<feature type="compositionally biased region" description="Low complexity" evidence="2">
    <location>
        <begin position="604"/>
        <end position="617"/>
    </location>
</feature>
<feature type="compositionally biased region" description="Low complexity" evidence="2">
    <location>
        <begin position="628"/>
        <end position="659"/>
    </location>
</feature>
<feature type="sequence conflict" description="In Ref. 1; ACI01704." evidence="4" ref="1">
    <original>P</original>
    <variation>A</variation>
    <location>
        <position position="409"/>
    </location>
</feature>
<protein>
    <recommendedName>
        <fullName evidence="1">Protein kintoun</fullName>
    </recommendedName>
    <alternativeName>
        <fullName evidence="1">Dynein assembly factor 2, axonemal homolog</fullName>
    </alternativeName>
    <alternativeName>
        <fullName>Paralyzed flagella protein 13</fullName>
    </alternativeName>
</protein>
<comment type="function">
    <text evidence="1 3">Required for cytoplasmic pre-assembly of axonemal dyneins, thereby playing a central role in motility in cilia and flagella. Involved in pre-assembly of dynein arm complexes in the cytoplasm before intraflagellar transport loads them for the ciliary compartment.</text>
</comment>
<comment type="subcellular location">
    <subcellularLocation>
        <location evidence="1 3">Cytoplasm</location>
    </subcellularLocation>
    <text evidence="3">Localizes exclusively in the cytoplasm but not in flagella.</text>
</comment>
<comment type="disruption phenotype">
    <text evidence="3">Paralyzed flagella, leading to a loss of motility. Electron microscopy image averages show that a density is missing from the inner dynein arms region in axonemes, which probably accounts for the paralyzed phenotype.</text>
</comment>
<comment type="similarity">
    <text evidence="1">Belongs to the PIH1 family. Kintoun subfamily.</text>
</comment>
<organism>
    <name type="scientific">Chlamydomonas reinhardtii</name>
    <name type="common">Chlamydomonas smithii</name>
    <dbReference type="NCBI Taxonomy" id="3055"/>
    <lineage>
        <taxon>Eukaryota</taxon>
        <taxon>Viridiplantae</taxon>
        <taxon>Chlorophyta</taxon>
        <taxon>core chlorophytes</taxon>
        <taxon>Chlorophyceae</taxon>
        <taxon>CS clade</taxon>
        <taxon>Chlamydomonadales</taxon>
        <taxon>Chlamydomonadaceae</taxon>
        <taxon>Chlamydomonas</taxon>
    </lineage>
</organism>
<evidence type="ECO:0000255" key="1">
    <source>
        <dbReference type="HAMAP-Rule" id="MF_03069"/>
    </source>
</evidence>
<evidence type="ECO:0000256" key="2">
    <source>
        <dbReference type="SAM" id="MobiDB-lite"/>
    </source>
</evidence>
<evidence type="ECO:0000269" key="3">
    <source>
    </source>
</evidence>
<evidence type="ECO:0000305" key="4"/>
<name>KTU_CHLRE</name>
<accession>B5BUZ8</accession>
<accession>B5U305</accession>
<sequence length="675" mass="69211">MPGKEENDTLEKSLKELNLTSDEMTKFEKAFKDPEFIKLFEEYAKEVSDPKVKAETDAYLRQIEQQGRAEDVYGAGTQLIVPDPAGAVIKTKVVSSSASKKQQQEQEKQEKEQQQQAAGAGKPEGPGKQGALPVGQKVFINICTCDKLERYSLTDAQDPATGRLRPKLTIPLSLGPVRQGADKQGAPAAVYDFVVHPDSWTFAAGNAAGLATLADTALDHVEQVGRCRLVRAWKRLNCRYKGTEGAAEPPVQCIRTSAAAAAGAAGEGAGGRVRPRPDVPGVPDLPGAKTAPPAAAGAAATAAAAAGAAEGGAGSSSRSTFSFDKSRKAGGTEAAGAVAKQEATITDPARPGYRHPDGAVTPEWGLLHRGEADLGEAWGDAGKGLAAGGRVPKELVVRVTLPDVSSAAPVDLDVGARCLALTVPNRYRLSVQLPYGVDDAKGRAKFDKARKVLEVTLPVVPPPAPPPGAAAAARAGLALIQELGGSEEAAEVKAEVEVEVADVMGRDQEAAHAKSEAGAGAGVKSPHTAAAASSGAAPAPAAASEEEEEEDKEDGGPAAGSGGDPAAAAAAAGASSGRELTENERKWRELHARQQQEEQEQQEAAEAAAAAAAAAAEPSSRSQLTGTVAQGGAAAAAESVAAAKQQVQQQPVAAAAAPTAVLRPRLNRELAMELD</sequence>
<proteinExistence type="evidence at transcript level"/>
<keyword id="KW-0963">Cytoplasm</keyword>